<proteinExistence type="inferred from homology"/>
<name>MP1_CARMV</name>
<evidence type="ECO:0000250" key="1"/>
<evidence type="ECO:0000250" key="2">
    <source>
        <dbReference type="UniProtKB" id="Q89682"/>
    </source>
</evidence>
<evidence type="ECO:0000256" key="3">
    <source>
        <dbReference type="SAM" id="MobiDB-lite"/>
    </source>
</evidence>
<evidence type="ECO:0000305" key="4"/>
<organism>
    <name type="scientific">Carnation mottle virus</name>
    <name type="common">CarMV</name>
    <dbReference type="NCBI Taxonomy" id="11986"/>
    <lineage>
        <taxon>Viruses</taxon>
        <taxon>Riboviria</taxon>
        <taxon>Orthornavirae</taxon>
        <taxon>Kitrinoviricota</taxon>
        <taxon>Tolucaviricetes</taxon>
        <taxon>Tolivirales</taxon>
        <taxon>Tombusviridae</taxon>
        <taxon>Procedovirinae</taxon>
        <taxon>Alphacarmovirus</taxon>
        <taxon>Alphacarmovirus dianthi</taxon>
    </lineage>
</organism>
<feature type="chain" id="PRO_0000222896" description="Double gene block protein 1">
    <location>
        <begin position="1"/>
        <end position="61"/>
    </location>
</feature>
<feature type="region of interest" description="Disordered" evidence="3">
    <location>
        <begin position="1"/>
        <end position="45"/>
    </location>
</feature>
<feature type="region of interest" description="RNA-binding" evidence="1">
    <location>
        <begin position="17"/>
        <end position="35"/>
    </location>
</feature>
<feature type="compositionally biased region" description="Basic and acidic residues" evidence="3">
    <location>
        <begin position="28"/>
        <end position="37"/>
    </location>
</feature>
<accession>P11794</accession>
<protein>
    <recommendedName>
        <fullName>Double gene block protein 1</fullName>
        <shortName>DGBp1</shortName>
    </recommendedName>
    <alternativeName>
        <fullName>Movement protein P7</fullName>
    </alternativeName>
</protein>
<reference key="1">
    <citation type="journal article" date="1985" name="Nucleic Acids Res.">
        <title>Nucleotide sequence and genome organization of carnation mottle virus RNA.</title>
        <authorList>
            <person name="Guilley H."/>
            <person name="Carrington J.C."/>
            <person name="Balazs E."/>
            <person name="Jonard G."/>
            <person name="Richards K."/>
            <person name="Morris T.J."/>
        </authorList>
    </citation>
    <scope>NUCLEOTIDE SEQUENCE [GENOMIC RNA]</scope>
</reference>
<keyword id="KW-0694">RNA-binding</keyword>
<keyword id="KW-0813">Transport</keyword>
<keyword id="KW-0916">Viral movement protein</keyword>
<comment type="function">
    <text evidence="2">Cell-to-cell movement. Displays RNA-binding activity.</text>
</comment>
<comment type="subunit">
    <text evidence="2">Homodimer.</text>
</comment>
<comment type="similarity">
    <text evidence="4">Belongs to the carmovirus double gene block protein 1 family.</text>
</comment>
<organismHost>
    <name type="scientific">Begonia</name>
    <dbReference type="NCBI Taxonomy" id="3681"/>
</organismHost>
<organismHost>
    <name type="scientific">Dianthus barbatus</name>
    <dbReference type="NCBI Taxonomy" id="278075"/>
</organismHost>
<organismHost>
    <name type="scientific">Dianthus caryophyllus</name>
    <name type="common">Carnation</name>
    <name type="synonym">Clove pink</name>
    <dbReference type="NCBI Taxonomy" id="3570"/>
</organismHost>
<organismHost>
    <name type="scientific">Dianthus chinensis</name>
    <dbReference type="NCBI Taxonomy" id="118431"/>
</organismHost>
<organismHost>
    <name type="scientific">Dianthus superbus</name>
    <dbReference type="NCBI Taxonomy" id="288950"/>
</organismHost>
<organismHost>
    <name type="scientific">Malus domestica</name>
    <name type="common">Apple</name>
    <name type="synonym">Pyrus malus</name>
    <dbReference type="NCBI Taxonomy" id="3750"/>
</organismHost>
<organismHost>
    <name type="scientific">Saponaria officinalis</name>
    <name type="common">Common soapwort</name>
    <name type="synonym">Lychnis saponaria</name>
    <dbReference type="NCBI Taxonomy" id="3572"/>
</organismHost>
<gene>
    <name type="ORF">ORF2</name>
</gene>
<sequence length="61" mass="6749">MDIESEVPVVGKQMLAGNRGKQKTRRSVAKDAIRKPASDSTNGGNWVNVADKIEVHIHFNF</sequence>
<dbReference type="EMBL" id="X02986">
    <property type="protein sequence ID" value="CAA26727.1"/>
    <property type="molecule type" value="Genomic_RNA"/>
</dbReference>
<dbReference type="RefSeq" id="YP_009032647.1">
    <property type="nucleotide sequence ID" value="NC_001265.2"/>
</dbReference>
<dbReference type="KEGG" id="vg:1491974"/>
<dbReference type="OrthoDB" id="39872at10239"/>
<dbReference type="Proteomes" id="UP000201784">
    <property type="component" value="Genome"/>
</dbReference>
<dbReference type="GO" id="GO:0003723">
    <property type="term" value="F:RNA binding"/>
    <property type="evidence" value="ECO:0007669"/>
    <property type="project" value="UniProtKB-KW"/>
</dbReference>
<dbReference type="GO" id="GO:0046740">
    <property type="term" value="P:transport of virus in host, cell to cell"/>
    <property type="evidence" value="ECO:0007669"/>
    <property type="project" value="UniProtKB-KW"/>
</dbReference>
<dbReference type="InterPro" id="IPR007982">
    <property type="entry name" value="Tombusvirus_movement"/>
</dbReference>
<dbReference type="Pfam" id="PF05318">
    <property type="entry name" value="Tombus_movement"/>
    <property type="match status" value="1"/>
</dbReference>